<feature type="chain" id="PRO_0000308670" description="CASP-like protein 5C2">
    <location>
        <begin position="1"/>
        <end position="154"/>
    </location>
</feature>
<feature type="topological domain" description="Cytoplasmic" evidence="2">
    <location>
        <begin position="1"/>
        <end position="17"/>
    </location>
</feature>
<feature type="transmembrane region" description="Helical" evidence="2">
    <location>
        <begin position="18"/>
        <end position="38"/>
    </location>
</feature>
<feature type="topological domain" description="Extracellular" evidence="2">
    <location>
        <begin position="39"/>
        <end position="41"/>
    </location>
</feature>
<feature type="transmembrane region" description="Helical" evidence="2">
    <location>
        <begin position="42"/>
        <end position="62"/>
    </location>
</feature>
<feature type="topological domain" description="Cytoplasmic" evidence="2">
    <location>
        <begin position="63"/>
        <end position="81"/>
    </location>
</feature>
<feature type="transmembrane region" description="Helical" evidence="2">
    <location>
        <begin position="82"/>
        <end position="102"/>
    </location>
</feature>
<feature type="topological domain" description="Extracellular" evidence="2">
    <location>
        <begin position="103"/>
        <end position="128"/>
    </location>
</feature>
<feature type="transmembrane region" description="Helical" evidence="2">
    <location>
        <begin position="129"/>
        <end position="149"/>
    </location>
</feature>
<feature type="topological domain" description="Cytoplasmic" evidence="2">
    <location>
        <begin position="150"/>
        <end position="154"/>
    </location>
</feature>
<comment type="subunit">
    <text evidence="1">Homodimer and heterodimers.</text>
</comment>
<comment type="subcellular location">
    <subcellularLocation>
        <location evidence="1">Cell membrane</location>
        <topology evidence="1">Multi-pass membrane protein</topology>
    </subcellularLocation>
</comment>
<comment type="similarity">
    <text evidence="3">Belongs to the Casparian strip membrane proteins (CASP) family.</text>
</comment>
<comment type="sequence caution" evidence="3">
    <conflict type="erroneous gene model prediction">
        <sequence resource="EMBL-CDS" id="CAB42910"/>
    </conflict>
    <text>The predicted gene has been split into 2 genes: At3g50808 and At3g50810.</text>
</comment>
<keyword id="KW-1003">Cell membrane</keyword>
<keyword id="KW-0472">Membrane</keyword>
<keyword id="KW-1185">Reference proteome</keyword>
<keyword id="KW-0812">Transmembrane</keyword>
<keyword id="KW-1133">Transmembrane helix</keyword>
<organism>
    <name type="scientific">Arabidopsis thaliana</name>
    <name type="common">Mouse-ear cress</name>
    <dbReference type="NCBI Taxonomy" id="3702"/>
    <lineage>
        <taxon>Eukaryota</taxon>
        <taxon>Viridiplantae</taxon>
        <taxon>Streptophyta</taxon>
        <taxon>Embryophyta</taxon>
        <taxon>Tracheophyta</taxon>
        <taxon>Spermatophyta</taxon>
        <taxon>Magnoliopsida</taxon>
        <taxon>eudicotyledons</taxon>
        <taxon>Gunneridae</taxon>
        <taxon>Pentapetalae</taxon>
        <taxon>rosids</taxon>
        <taxon>malvids</taxon>
        <taxon>Brassicales</taxon>
        <taxon>Brassicaceae</taxon>
        <taxon>Camelineae</taxon>
        <taxon>Arabidopsis</taxon>
    </lineage>
</organism>
<sequence>MEHVPGSFGTSASFALRFGQTIFSAASLIFMCFDFDFYDFTTFCYLAMVMAIVTPWSILLALTDTYSVLVKLLPQELRVLSIVFAGDFVLSFLSLGGACAVASATELLASADGKICDGSLCIQYQVSAALAFLCWFLLLASALFNFWSLPSLYY</sequence>
<reference key="1">
    <citation type="journal article" date="2000" name="Nature">
        <title>Sequence and analysis of chromosome 3 of the plant Arabidopsis thaliana.</title>
        <authorList>
            <person name="Salanoubat M."/>
            <person name="Lemcke K."/>
            <person name="Rieger M."/>
            <person name="Ansorge W."/>
            <person name="Unseld M."/>
            <person name="Fartmann B."/>
            <person name="Valle G."/>
            <person name="Bloecker H."/>
            <person name="Perez-Alonso M."/>
            <person name="Obermaier B."/>
            <person name="Delseny M."/>
            <person name="Boutry M."/>
            <person name="Grivell L.A."/>
            <person name="Mache R."/>
            <person name="Puigdomenech P."/>
            <person name="De Simone V."/>
            <person name="Choisne N."/>
            <person name="Artiguenave F."/>
            <person name="Robert C."/>
            <person name="Brottier P."/>
            <person name="Wincker P."/>
            <person name="Cattolico L."/>
            <person name="Weissenbach J."/>
            <person name="Saurin W."/>
            <person name="Quetier F."/>
            <person name="Schaefer M."/>
            <person name="Mueller-Auer S."/>
            <person name="Gabel C."/>
            <person name="Fuchs M."/>
            <person name="Benes V."/>
            <person name="Wurmbach E."/>
            <person name="Drzonek H."/>
            <person name="Erfle H."/>
            <person name="Jordan N."/>
            <person name="Bangert S."/>
            <person name="Wiedelmann R."/>
            <person name="Kranz H."/>
            <person name="Voss H."/>
            <person name="Holland R."/>
            <person name="Brandt P."/>
            <person name="Nyakatura G."/>
            <person name="Vezzi A."/>
            <person name="D'Angelo M."/>
            <person name="Pallavicini A."/>
            <person name="Toppo S."/>
            <person name="Simionati B."/>
            <person name="Conrad A."/>
            <person name="Hornischer K."/>
            <person name="Kauer G."/>
            <person name="Loehnert T.-H."/>
            <person name="Nordsiek G."/>
            <person name="Reichelt J."/>
            <person name="Scharfe M."/>
            <person name="Schoen O."/>
            <person name="Bargues M."/>
            <person name="Terol J."/>
            <person name="Climent J."/>
            <person name="Navarro P."/>
            <person name="Collado C."/>
            <person name="Perez-Perez A."/>
            <person name="Ottenwaelder B."/>
            <person name="Duchemin D."/>
            <person name="Cooke R."/>
            <person name="Laudie M."/>
            <person name="Berger-Llauro C."/>
            <person name="Purnelle B."/>
            <person name="Masuy D."/>
            <person name="de Haan M."/>
            <person name="Maarse A.C."/>
            <person name="Alcaraz J.-P."/>
            <person name="Cottet A."/>
            <person name="Casacuberta E."/>
            <person name="Monfort A."/>
            <person name="Argiriou A."/>
            <person name="Flores M."/>
            <person name="Liguori R."/>
            <person name="Vitale D."/>
            <person name="Mannhaupt G."/>
            <person name="Haase D."/>
            <person name="Schoof H."/>
            <person name="Rudd S."/>
            <person name="Zaccaria P."/>
            <person name="Mewes H.-W."/>
            <person name="Mayer K.F.X."/>
            <person name="Kaul S."/>
            <person name="Town C.D."/>
            <person name="Koo H.L."/>
            <person name="Tallon L.J."/>
            <person name="Jenkins J."/>
            <person name="Rooney T."/>
            <person name="Rizzo M."/>
            <person name="Walts A."/>
            <person name="Utterback T."/>
            <person name="Fujii C.Y."/>
            <person name="Shea T.P."/>
            <person name="Creasy T.H."/>
            <person name="Haas B."/>
            <person name="Maiti R."/>
            <person name="Wu D."/>
            <person name="Peterson J."/>
            <person name="Van Aken S."/>
            <person name="Pai G."/>
            <person name="Militscher J."/>
            <person name="Sellers P."/>
            <person name="Gill J.E."/>
            <person name="Feldblyum T.V."/>
            <person name="Preuss D."/>
            <person name="Lin X."/>
            <person name="Nierman W.C."/>
            <person name="Salzberg S.L."/>
            <person name="White O."/>
            <person name="Venter J.C."/>
            <person name="Fraser C.M."/>
            <person name="Kaneko T."/>
            <person name="Nakamura Y."/>
            <person name="Sato S."/>
            <person name="Kato T."/>
            <person name="Asamizu E."/>
            <person name="Sasamoto S."/>
            <person name="Kimura T."/>
            <person name="Idesawa K."/>
            <person name="Kawashima K."/>
            <person name="Kishida Y."/>
            <person name="Kiyokawa C."/>
            <person name="Kohara M."/>
            <person name="Matsumoto M."/>
            <person name="Matsuno A."/>
            <person name="Muraki A."/>
            <person name="Nakayama S."/>
            <person name="Nakazaki N."/>
            <person name="Shinpo S."/>
            <person name="Takeuchi C."/>
            <person name="Wada T."/>
            <person name="Watanabe A."/>
            <person name="Yamada M."/>
            <person name="Yasuda M."/>
            <person name="Tabata S."/>
        </authorList>
    </citation>
    <scope>NUCLEOTIDE SEQUENCE [LARGE SCALE GENOMIC DNA]</scope>
    <source>
        <strain>cv. Columbia</strain>
    </source>
</reference>
<reference key="2">
    <citation type="journal article" date="2017" name="Plant J.">
        <title>Araport11: a complete reannotation of the Arabidopsis thaliana reference genome.</title>
        <authorList>
            <person name="Cheng C.Y."/>
            <person name="Krishnakumar V."/>
            <person name="Chan A.P."/>
            <person name="Thibaud-Nissen F."/>
            <person name="Schobel S."/>
            <person name="Town C.D."/>
        </authorList>
    </citation>
    <scope>GENOME REANNOTATION</scope>
    <source>
        <strain>cv. Columbia</strain>
    </source>
</reference>
<reference key="3">
    <citation type="journal article" date="2014" name="Plant Physiol.">
        <title>Functional and evolutionary analysis of the CASPARIAN STRIP MEMBRANE DOMAIN PROTEIN family.</title>
        <authorList>
            <person name="Roppolo D."/>
            <person name="Boeckmann B."/>
            <person name="Pfister A."/>
            <person name="Boutet E."/>
            <person name="Rubio M.C."/>
            <person name="Denervaud-Tendon V."/>
            <person name="Vermeer J.E."/>
            <person name="Gheyselinck J."/>
            <person name="Xenarios I."/>
            <person name="Geldner N."/>
        </authorList>
    </citation>
    <scope>GENE FAMILY</scope>
    <scope>NOMENCLATURE</scope>
</reference>
<dbReference type="EMBL" id="AL049862">
    <property type="protein sequence ID" value="CAB42910.1"/>
    <property type="status" value="ALT_SEQ"/>
    <property type="molecule type" value="Genomic_DNA"/>
</dbReference>
<dbReference type="EMBL" id="CP002686">
    <property type="protein sequence ID" value="AEE78713.1"/>
    <property type="molecule type" value="Genomic_DNA"/>
</dbReference>
<dbReference type="EMBL" id="CP002686">
    <property type="protein sequence ID" value="ANM64333.1"/>
    <property type="molecule type" value="Genomic_DNA"/>
</dbReference>
<dbReference type="EMBL" id="CP002686">
    <property type="protein sequence ID" value="ANM64334.1"/>
    <property type="molecule type" value="Genomic_DNA"/>
</dbReference>
<dbReference type="PIR" id="T08402">
    <property type="entry name" value="T08402"/>
</dbReference>
<dbReference type="RefSeq" id="NP_001326370.1">
    <property type="nucleotide sequence ID" value="NM_001339482.1"/>
</dbReference>
<dbReference type="RefSeq" id="NP_001326371.1">
    <property type="nucleotide sequence ID" value="NM_001339483.1"/>
</dbReference>
<dbReference type="RefSeq" id="NP_190650.4">
    <property type="nucleotide sequence ID" value="NM_114941.5"/>
</dbReference>
<dbReference type="FunCoup" id="P0CB17">
    <property type="interactions" value="1"/>
</dbReference>
<dbReference type="PaxDb" id="3702-AT3G50810.1"/>
<dbReference type="EnsemblPlants" id="AT3G50810.1">
    <property type="protein sequence ID" value="AT3G50810.1"/>
    <property type="gene ID" value="AT3G50810"/>
</dbReference>
<dbReference type="EnsemblPlants" id="AT3G50810.2">
    <property type="protein sequence ID" value="AT3G50810.2"/>
    <property type="gene ID" value="AT3G50810"/>
</dbReference>
<dbReference type="EnsemblPlants" id="AT3G50810.3">
    <property type="protein sequence ID" value="AT3G50810.3"/>
    <property type="gene ID" value="AT3G50810"/>
</dbReference>
<dbReference type="GeneID" id="824245"/>
<dbReference type="Gramene" id="AT3G50810.1">
    <property type="protein sequence ID" value="AT3G50810.1"/>
    <property type="gene ID" value="AT3G50810"/>
</dbReference>
<dbReference type="Gramene" id="AT3G50810.2">
    <property type="protein sequence ID" value="AT3G50810.2"/>
    <property type="gene ID" value="AT3G50810"/>
</dbReference>
<dbReference type="Gramene" id="AT3G50810.3">
    <property type="protein sequence ID" value="AT3G50810.3"/>
    <property type="gene ID" value="AT3G50810"/>
</dbReference>
<dbReference type="KEGG" id="ath:AT3G50810"/>
<dbReference type="Araport" id="AT3G50810"/>
<dbReference type="TAIR" id="AT3G50810">
    <property type="gene designation" value="CASPL5C2"/>
</dbReference>
<dbReference type="eggNOG" id="ENOG502RZFM">
    <property type="taxonomic scope" value="Eukaryota"/>
</dbReference>
<dbReference type="HOGENOM" id="CLU_103961_1_0_1"/>
<dbReference type="InParanoid" id="P0CB17"/>
<dbReference type="OMA" id="DNICLRY"/>
<dbReference type="PhylomeDB" id="P0CB17"/>
<dbReference type="PRO" id="PR:P0CB17"/>
<dbReference type="Proteomes" id="UP000006548">
    <property type="component" value="Chromosome 3"/>
</dbReference>
<dbReference type="ExpressionAtlas" id="P0CB17">
    <property type="expression patterns" value="baseline and differential"/>
</dbReference>
<dbReference type="GO" id="GO:0005886">
    <property type="term" value="C:plasma membrane"/>
    <property type="evidence" value="ECO:0007669"/>
    <property type="project" value="UniProtKB-SubCell"/>
</dbReference>
<dbReference type="InterPro" id="IPR006702">
    <property type="entry name" value="CASP_dom"/>
</dbReference>
<dbReference type="InterPro" id="IPR045009">
    <property type="entry name" value="CASPL-5"/>
</dbReference>
<dbReference type="PANTHER" id="PTHR32021">
    <property type="entry name" value="CASP-LIKE PROTEIN 5B3"/>
    <property type="match status" value="1"/>
</dbReference>
<dbReference type="PANTHER" id="PTHR32021:SF21">
    <property type="entry name" value="CASP-LIKE PROTEIN 5C2"/>
    <property type="match status" value="1"/>
</dbReference>
<dbReference type="Pfam" id="PF04535">
    <property type="entry name" value="CASP_dom"/>
    <property type="match status" value="1"/>
</dbReference>
<accession>P0CB17</accession>
<accession>A0A1I9LP25</accession>
<accession>Q9SVL7</accession>
<protein>
    <recommendedName>
        <fullName>CASP-like protein 5C2</fullName>
        <shortName>AtCASPL5C2</shortName>
    </recommendedName>
</protein>
<name>CSPLH_ARATH</name>
<evidence type="ECO:0000250" key="1"/>
<evidence type="ECO:0000255" key="2"/>
<evidence type="ECO:0000305" key="3"/>
<gene>
    <name type="ordered locus">At3g50810</name>
    <name type="ORF">F18B3.90</name>
</gene>
<proteinExistence type="evidence at transcript level"/>